<organismHost>
    <name type="scientific">Equus caballus</name>
    <name type="common">Horse</name>
    <dbReference type="NCBI Taxonomy" id="9796"/>
</organismHost>
<dbReference type="EMBL" id="AY665713">
    <property type="protein sequence ID" value="AAT67291.1"/>
    <property type="molecule type" value="Genomic_DNA"/>
</dbReference>
<dbReference type="PIR" id="H36798">
    <property type="entry name" value="WZBEC7"/>
</dbReference>
<dbReference type="KEGG" id="vg:1487555"/>
<dbReference type="Proteomes" id="UP000001189">
    <property type="component" value="Segment"/>
</dbReference>
<evidence type="ECO:0000256" key="1">
    <source>
        <dbReference type="SAM" id="MobiDB-lite"/>
    </source>
</evidence>
<organism>
    <name type="scientific">Equine herpesvirus 1 (strain Ab4p)</name>
    <name type="common">EHV-1</name>
    <name type="synonym">Equine abortion virus</name>
    <dbReference type="NCBI Taxonomy" id="31520"/>
    <lineage>
        <taxon>Viruses</taxon>
        <taxon>Duplodnaviria</taxon>
        <taxon>Heunggongvirae</taxon>
        <taxon>Peploviricota</taxon>
        <taxon>Herviviricetes</taxon>
        <taxon>Herpesvirales</taxon>
        <taxon>Orthoherpesviridae</taxon>
        <taxon>Alphaherpesvirinae</taxon>
        <taxon>Varicellovirus</taxon>
        <taxon>Varicellovirus equidalpha1</taxon>
        <taxon>Equid alphaherpesvirus 1</taxon>
    </lineage>
</organism>
<protein>
    <recommendedName>
        <fullName>Gene 34 protein</fullName>
    </recommendedName>
</protein>
<proteinExistence type="predicted"/>
<feature type="chain" id="PRO_0000116167" description="Gene 34 protein">
    <location>
        <begin position="1"/>
        <end position="160"/>
    </location>
</feature>
<feature type="region of interest" description="Disordered" evidence="1">
    <location>
        <begin position="1"/>
        <end position="26"/>
    </location>
</feature>
<feature type="compositionally biased region" description="Polar residues" evidence="1">
    <location>
        <begin position="1"/>
        <end position="11"/>
    </location>
</feature>
<name>VG34_EHV1B</name>
<accession>P28989</accession>
<accession>Q6DLH7</accession>
<keyword id="KW-1185">Reference proteome</keyword>
<sequence length="160" mass="17306">MDSPRGISTATGDAHAEAAVSPAAEIQIKTEAPDVDGPEATTECLDHTYTQQTSGGDGLDAIDTDDLLEMVLTSENTESEPGIPFALRGNFICCRDDNCRACRELPFRPSVIGFSRDPHVSMALDMTSGNWAYVPRVFPDTPTAPWMANYCIPDLDEHAD</sequence>
<reference key="1">
    <citation type="journal article" date="1992" name="Virology">
        <title>The DNA sequence of equine herpesvirus-1.</title>
        <authorList>
            <person name="Telford E.A.R."/>
            <person name="Watson M.S."/>
            <person name="McBride K."/>
            <person name="Davison A.J."/>
        </authorList>
    </citation>
    <scope>NUCLEOTIDE SEQUENCE [LARGE SCALE GENOMIC DNA]</scope>
</reference>
<gene>
    <name type="ordered locus">34</name>
</gene>